<sequence length="3184" mass="356654">MEILNLSIEFHIPDGNTLKKMVRVDNTTKIGEMSRLLLDKFGRSDFDPSQFQLIVPQKTATISFHVLSDLNKSLSSYNIKNNDELIFKKRQKKTNPGNAKLVSKKKPESIFKTLFSMSTLEMKLGEDKSAPEISEVENQIDDLGILFKALEILTNSFNQNKDIEDIVSSFQYVGNESEIADLVKIVLSNNDGLSSNSNNNSSSNIGSMLNSGGGGSGSNLGLGLSSGTGGSFNGNSSGSSSSSSYYYNNNNNNNNIELTAQQKNPKVLCSFILHLLQIIFSQTSLTYSLYITYLKTNNNNNNNNNNNSSSPSNTDLSRSTYFYDIPVKSRIILKHIMLFLYNLTQRDASLLDSLSNIIGPFILGNVLLDPPPPPPSNSSPPISKSTSNNNLNVSNYHNNNNNNNNSNSNLSNSGNGDESPDFQSQNLVKSYNRENSGNSLNSMLHQTSLPNNNNSNVVNNNNNNNNNNNNNNNNNNNNNNNNNNNNNNNNNINNNSTSSNNNNNNNSNNNNSQIPPLIQVRQPSSDFTTTSSGNLRSLSNTENSLCKKVAIDLIQNIPLYLLFSHLKIQQLEGEKILFSAENIFCVDKCNFPPNKAMLGEIWVTNFRIIFINSNSNSSTIPNSTSSTSISSFASTQNLSILSIMTLFGSYNGNGGSGPTNATLSGGGSTSSSSNLNTPITTSPIHTSTNSNGAILNPINNSLINSNNNNNNNNINNNINNNINNINNNINNINSNSNNNINSIINSNSNNNNNNNNLNKLSTLDNTEIPLSMIYRWKMVKTGSLYDSFKIYCKDFRCKIIGFQINSHVLVKFKDLLTKCSVPTLDTIFAYNSKESSFGNTECFPDHSLLQEYNRIGVSWDLWRTTTQSKLCEHYPPTSVVPKSVSDNIVVTSAYYRSYGFPVLAWSHPTQKSSITRATSPEDQNNGSSNYLLTPNSPNSSSSNLANNNNSNNNNINNNNNNNNNNNNNNNNNSNNNNNNNNNNNNNNNNNNNNNGGGSGSRSTTIDNGQTSILNKNISNTPLIQSPTPNLPPSQHSLNLLMSPQTSSPRIHQSISSSSIPQVCQEDIDFLRGILDIKSSSMLNVFDTGSGGSYSSTMIGCQIEFLNLPPPNKVRERFNRLLHLHLGNPDSEWSETIRFFWLDPLKPILSAAINIAMHVDQGRSVLIQNSSSGPDIELQLSSLAQILLDPYYRTMDGFKVLIEKEWLSYGYPFSKRCHHKTSDDGFSPIFMQFIFLVWQIWKEFPTHFQFNEYYLLTLLDNVYNSRFGTFLCNNYKERMENNVYSSTKSFWSFQQQNQSRFTNLFYRPSPSSSSSSSSSSSSLSNGYNSSVQHLKCLRVFQDTMWNEYFFRYCFKSSLAIEQFEDRIKLSLLDIEMTVNSAITSTANALLPFLETLDLSNLRLYYLPSESTLYHLVGLRELNLSKNNLNSISCSLSSLVKLEKLSFEENSITNLPIETVVLLAEKLTSLTELNLSSNQLIDLPIEFSMFSKSLKKLHLKNNRFSAIPEVLGMLENLIELDLSELDLSSSTNSGVGIPTKLSKLCILNLNQTRIVELPKEFGDLKSLEKLYLDFNSLVTLPHSFRQLTNLEELSLSFNSMTELPREVCFLINLKKLMIEGNQIQFLPNEISQLSKLMILNVCKNKLDSLPASIGQLSQLVSLNLNNNSQLVSLRPTMGLLSNLVELKLDGTRLKTPPPEIVSLGLKSILLYLKDLIKGQEQCYKMKLMIVGQENVGKTTLLKTLKEKKKKATPSGPNISTDGIAIDQWVFSCLFEELDETSQNGRLIKKKQDITLSIWDFAGQEIYYTTHQFFLSERSVYIVAWNCALAEEESRVEFWLQSITTRAKDAPIIIVGTHLDDVNRTTAKMQKKRMKEKYLIRYQNIKAIKLVSCTSGKGITSLREKLEALVQSQSNMGESLPRSYMLLENLVKEETKKRIIPTIPWTEFIQMGTICTITDEAELLRATMFLHQLGSLVYFPKEPGLKQFVILDPQWITTMLSSIITTKHSYAKDGILNHKSLKQIWRPPQYPTHLHPHLISLLEKFEISYNLSPDSTSFETGTSLIPSLLLNDRPAIFPSLWGSFNQLVRQFGRIYQFEFVPNGFFSRLMVRILNFARVEAKCYWKNGMILQHDEETIFLEMNNAKKSLSFTVRGGANSTTLSRDVIETIQSLLDDSFQLPTYVFVPCFHCIFLSLPQCYYFPLDVCENAAVKGTGYLKCLTYDANVRTDLLVPDLVMSNFTGAKIPFDQLMIEELIGEGGAALVYRARWQGQTVAVKKLKTIENLDSPIEINDISLSKAFNEFRRECWVMSELEHPNIVQLKGLCLDPLCIVTEYLPHGNLYSFLHKPEMEFSWLFRLKVALDISSGMAFLHSSTPPIIHRDLKSPNILLASINENAQTIAKVVDFGLSGLQHTITNRGVENPLWLAPEILNKTKEASTQTDVYAFGVILWELVTRKDYFGEIGFMTLIEEKVINGERPKIPEDCPEMYSKLIVECWQTDASQRPKFSEIEDRLIKIAEAMFPDIHLSNIYQQQQQQQQQQQQSSPSKSSSTSPIIKSLNLSTVSELGESSNQTPKQNITTTTTTTHSDHKRQLSTDSGSSYRNKSHDTISHSTSVASDLLDIDNTLTVATTPRNRSKTNDDNIINTSNGRIITNSINNSNSNNEQPLSPNSLLQHSQSQQQLENVGLSALLDALPNSPIVSSTAAPSTTSTNKKVMYTSIVGDSARTRRGSVSIQPFQNEFNRELLPNQGTIQCLIKVGGNGCQVWAGTGNGFISTWKIEGQEKYIQRLFEANKDKKRIHCLYPYMNTVWCGSADDSITIWDIDTYQKIKSYSVEGPSCITRVGNTMWVGTIVNTIHIYDLKKKTKYKGKISLDSPIECLLRRDQEVWVATLGNIARIDVNSLRVVQMTKAHERAIHAMIQVDDHVWTASSDGTIKVWSSTCQSVHTIENAHSSRIFTLELVGDFVWSGSWDTTIKIWSTKDYHLVSENSGKHKDAISSFVYISNDQPLQTNERPIQKQVWSGSWDSSICVWALPNDTNSRSNTIFSSDSQFNLNGGSSNSITNSNSNSNNNLNGNLNNSNNSINNNYNNNNNNNNNNNNNNNNNNNNNNNNNNNNNNNYYYSNNVNSPNQASQSAGHLGTIHEQTSPNSATPLSSTPPGSKGLMQRRTVSFMNVLERFSNDKNRK</sequence>
<dbReference type="EC" id="2.7.11.1"/>
<dbReference type="EMBL" id="AAFI02000005">
    <property type="protein sequence ID" value="EAL71975.1"/>
    <property type="molecule type" value="Genomic_DNA"/>
</dbReference>
<dbReference type="EMBL" id="AY170918">
    <property type="protein sequence ID" value="AAO12857.1"/>
    <property type="status" value="ALT_FRAME"/>
    <property type="molecule type" value="Genomic_DNA"/>
</dbReference>
<dbReference type="RefSeq" id="XP_645923.1">
    <property type="nucleotide sequence ID" value="XM_640831.1"/>
</dbReference>
<dbReference type="SMR" id="Q55E58"/>
<dbReference type="FunCoup" id="Q55E58">
    <property type="interactions" value="68"/>
</dbReference>
<dbReference type="STRING" id="44689.Q55E58"/>
<dbReference type="GlyGen" id="Q55E58">
    <property type="glycosylation" value="1 site"/>
</dbReference>
<dbReference type="PaxDb" id="44689-DDB0191503"/>
<dbReference type="EnsemblProtists" id="EAL71975">
    <property type="protein sequence ID" value="EAL71975"/>
    <property type="gene ID" value="DDB_G0269250"/>
</dbReference>
<dbReference type="GeneID" id="8616864"/>
<dbReference type="KEGG" id="ddi:DDB_G0269250"/>
<dbReference type="dictyBase" id="DDB_G0269250">
    <property type="gene designation" value="pats1"/>
</dbReference>
<dbReference type="VEuPathDB" id="AmoebaDB:DDB_G0269250"/>
<dbReference type="eggNOG" id="KOG0192">
    <property type="taxonomic scope" value="Eukaryota"/>
</dbReference>
<dbReference type="eggNOG" id="KOG0619">
    <property type="taxonomic scope" value="Eukaryota"/>
</dbReference>
<dbReference type="eggNOG" id="KOG4471">
    <property type="taxonomic scope" value="Eukaryota"/>
</dbReference>
<dbReference type="HOGENOM" id="CLU_225525_0_0_1"/>
<dbReference type="InParanoid" id="Q55E58"/>
<dbReference type="OMA" id="CKDFRCK"/>
<dbReference type="Reactome" id="R-DDI-1483248">
    <property type="pathway name" value="Synthesis of PIPs at the ER membrane"/>
</dbReference>
<dbReference type="Reactome" id="R-DDI-1632852">
    <property type="pathway name" value="Macroautophagy"/>
</dbReference>
<dbReference type="Reactome" id="R-DDI-1660499">
    <property type="pathway name" value="Synthesis of PIPs at the plasma membrane"/>
</dbReference>
<dbReference type="Reactome" id="R-DDI-1660516">
    <property type="pathway name" value="Synthesis of PIPs at the early endosome membrane"/>
</dbReference>
<dbReference type="Reactome" id="R-DDI-1660517">
    <property type="pathway name" value="Synthesis of PIPs at the late endosome membrane"/>
</dbReference>
<dbReference type="Reactome" id="R-DDI-8876198">
    <property type="pathway name" value="RAB GEFs exchange GTP for GDP on RABs"/>
</dbReference>
<dbReference type="PRO" id="PR:Q55E58"/>
<dbReference type="Proteomes" id="UP000002195">
    <property type="component" value="Chromosome 1"/>
</dbReference>
<dbReference type="GO" id="GO:0042641">
    <property type="term" value="C:actomyosin"/>
    <property type="evidence" value="ECO:0000314"/>
    <property type="project" value="dictyBase"/>
</dbReference>
<dbReference type="GO" id="GO:0005737">
    <property type="term" value="C:cytoplasm"/>
    <property type="evidence" value="ECO:0000318"/>
    <property type="project" value="GO_Central"/>
</dbReference>
<dbReference type="GO" id="GO:0005829">
    <property type="term" value="C:cytosol"/>
    <property type="evidence" value="ECO:0000304"/>
    <property type="project" value="dictyBase"/>
</dbReference>
<dbReference type="GO" id="GO:0016020">
    <property type="term" value="C:membrane"/>
    <property type="evidence" value="ECO:0000318"/>
    <property type="project" value="GO_Central"/>
</dbReference>
<dbReference type="GO" id="GO:0005524">
    <property type="term" value="F:ATP binding"/>
    <property type="evidence" value="ECO:0007669"/>
    <property type="project" value="UniProtKB-KW"/>
</dbReference>
<dbReference type="GO" id="GO:0005525">
    <property type="term" value="F:GTP binding"/>
    <property type="evidence" value="ECO:0007669"/>
    <property type="project" value="UniProtKB-KW"/>
</dbReference>
<dbReference type="GO" id="GO:0004438">
    <property type="term" value="F:phosphatidylinositol-3-phosphate phosphatase activity"/>
    <property type="evidence" value="ECO:0000318"/>
    <property type="project" value="GO_Central"/>
</dbReference>
<dbReference type="GO" id="GO:0004721">
    <property type="term" value="F:phosphoprotein phosphatase activity"/>
    <property type="evidence" value="ECO:0000250"/>
    <property type="project" value="dictyBase"/>
</dbReference>
<dbReference type="GO" id="GO:0106310">
    <property type="term" value="F:protein serine kinase activity"/>
    <property type="evidence" value="ECO:0007669"/>
    <property type="project" value="RHEA"/>
</dbReference>
<dbReference type="GO" id="GO:0004674">
    <property type="term" value="F:protein serine/threonine kinase activity"/>
    <property type="evidence" value="ECO:0007669"/>
    <property type="project" value="UniProtKB-KW"/>
</dbReference>
<dbReference type="GO" id="GO:0099139">
    <property type="term" value="P:cheating during chimeric sorocarp development"/>
    <property type="evidence" value="ECO:0000315"/>
    <property type="project" value="dictyBase"/>
</dbReference>
<dbReference type="GO" id="GO:0000281">
    <property type="term" value="P:mitotic cytokinesis"/>
    <property type="evidence" value="ECO:0000315"/>
    <property type="project" value="dictyBase"/>
</dbReference>
<dbReference type="GO" id="GO:0046856">
    <property type="term" value="P:phosphatidylinositol dephosphorylation"/>
    <property type="evidence" value="ECO:0000318"/>
    <property type="project" value="GO_Central"/>
</dbReference>
<dbReference type="CDD" id="cd13999">
    <property type="entry name" value="STKc_MAP3K-like"/>
    <property type="match status" value="1"/>
</dbReference>
<dbReference type="FunFam" id="3.30.200.20:FF:000034">
    <property type="entry name" value="Kinase suppressor of Ras 1"/>
    <property type="match status" value="1"/>
</dbReference>
<dbReference type="FunFam" id="3.30.70.1390:FF:000001">
    <property type="entry name" value="Leucine-rich repeat serine/threonine-protein kinase 2"/>
    <property type="match status" value="1"/>
</dbReference>
<dbReference type="FunFam" id="3.80.10.10:FF:002497">
    <property type="entry name" value="Probable serine/threonine-protein kinase pats1"/>
    <property type="match status" value="1"/>
</dbReference>
<dbReference type="Gene3D" id="1.10.10.2200">
    <property type="match status" value="1"/>
</dbReference>
<dbReference type="Gene3D" id="3.30.310.200">
    <property type="match status" value="1"/>
</dbReference>
<dbReference type="Gene3D" id="3.40.50.300">
    <property type="entry name" value="P-loop containing nucleotide triphosphate hydrolases"/>
    <property type="match status" value="1"/>
</dbReference>
<dbReference type="Gene3D" id="3.10.20.90">
    <property type="entry name" value="Phosphatidylinositol 3-kinase Catalytic Subunit, Chain A, domain 1"/>
    <property type="match status" value="1"/>
</dbReference>
<dbReference type="Gene3D" id="3.30.200.20">
    <property type="entry name" value="Phosphorylase Kinase, domain 1"/>
    <property type="match status" value="1"/>
</dbReference>
<dbReference type="Gene3D" id="3.80.10.10">
    <property type="entry name" value="Ribonuclease Inhibitor"/>
    <property type="match status" value="2"/>
</dbReference>
<dbReference type="Gene3D" id="3.30.70.1390">
    <property type="entry name" value="ROC domain from the Parkinson's disease-associated leucine-rich repeat kinase 2"/>
    <property type="match status" value="1"/>
</dbReference>
<dbReference type="Gene3D" id="1.10.510.10">
    <property type="entry name" value="Transferase(Phosphotransferase) domain 1"/>
    <property type="match status" value="1"/>
</dbReference>
<dbReference type="Gene3D" id="1.10.10.10">
    <property type="entry name" value="Winged helix-like DNA-binding domain superfamily/Winged helix DNA-binding domain"/>
    <property type="match status" value="1"/>
</dbReference>
<dbReference type="Gene3D" id="2.130.10.10">
    <property type="entry name" value="YVTN repeat-like/Quinoprotein amine dehydrogenase"/>
    <property type="match status" value="1"/>
</dbReference>
<dbReference type="InterPro" id="IPR032171">
    <property type="entry name" value="COR-A"/>
</dbReference>
<dbReference type="InterPro" id="IPR011009">
    <property type="entry name" value="Kinase-like_dom_sf"/>
</dbReference>
<dbReference type="InterPro" id="IPR001611">
    <property type="entry name" value="Leu-rich_rpt"/>
</dbReference>
<dbReference type="InterPro" id="IPR003591">
    <property type="entry name" value="Leu-rich_rpt_typical-subtyp"/>
</dbReference>
<dbReference type="InterPro" id="IPR032675">
    <property type="entry name" value="LRR_dom_sf"/>
</dbReference>
<dbReference type="InterPro" id="IPR030564">
    <property type="entry name" value="Myotubularin"/>
</dbReference>
<dbReference type="InterPro" id="IPR010569">
    <property type="entry name" value="Myotubularin-like_Pase_dom"/>
</dbReference>
<dbReference type="InterPro" id="IPR027417">
    <property type="entry name" value="P-loop_NTPase"/>
</dbReference>
<dbReference type="InterPro" id="IPR029021">
    <property type="entry name" value="Prot-tyrosine_phosphatase-like"/>
</dbReference>
<dbReference type="InterPro" id="IPR000719">
    <property type="entry name" value="Prot_kinase_dom"/>
</dbReference>
<dbReference type="InterPro" id="IPR011047">
    <property type="entry name" value="Quinoprotein_ADH-like_sf"/>
</dbReference>
<dbReference type="InterPro" id="IPR020859">
    <property type="entry name" value="ROC"/>
</dbReference>
<dbReference type="InterPro" id="IPR001245">
    <property type="entry name" value="Ser-Thr/Tyr_kinase_cat_dom"/>
</dbReference>
<dbReference type="InterPro" id="IPR008271">
    <property type="entry name" value="Ser/Thr_kinase_AS"/>
</dbReference>
<dbReference type="InterPro" id="IPR005225">
    <property type="entry name" value="Small_GTP-bd"/>
</dbReference>
<dbReference type="InterPro" id="IPR015943">
    <property type="entry name" value="WD40/YVTN_repeat-like_dom_sf"/>
</dbReference>
<dbReference type="InterPro" id="IPR001680">
    <property type="entry name" value="WD40_rpt"/>
</dbReference>
<dbReference type="InterPro" id="IPR036388">
    <property type="entry name" value="WH-like_DNA-bd_sf"/>
</dbReference>
<dbReference type="NCBIfam" id="TIGR00231">
    <property type="entry name" value="small_GTP"/>
    <property type="match status" value="1"/>
</dbReference>
<dbReference type="PANTHER" id="PTHR10807">
    <property type="entry name" value="MYOTUBULARIN-RELATED"/>
    <property type="match status" value="1"/>
</dbReference>
<dbReference type="PANTHER" id="PTHR10807:SF113">
    <property type="entry name" value="SERINE_THREONINE-PROTEIN KINASE PATS1-RELATED"/>
    <property type="match status" value="1"/>
</dbReference>
<dbReference type="Pfam" id="PF16095">
    <property type="entry name" value="COR-A"/>
    <property type="match status" value="1"/>
</dbReference>
<dbReference type="Pfam" id="PF25497">
    <property type="entry name" value="COR-B"/>
    <property type="match status" value="1"/>
</dbReference>
<dbReference type="Pfam" id="PF06602">
    <property type="entry name" value="Myotub-related"/>
    <property type="match status" value="1"/>
</dbReference>
<dbReference type="Pfam" id="PF07714">
    <property type="entry name" value="PK_Tyr_Ser-Thr"/>
    <property type="match status" value="1"/>
</dbReference>
<dbReference type="Pfam" id="PF08477">
    <property type="entry name" value="Roc"/>
    <property type="match status" value="1"/>
</dbReference>
<dbReference type="PRINTS" id="PR00449">
    <property type="entry name" value="RASTRNSFRMNG"/>
</dbReference>
<dbReference type="PRINTS" id="PR00109">
    <property type="entry name" value="TYRKINASE"/>
</dbReference>
<dbReference type="SMART" id="SM00364">
    <property type="entry name" value="LRR_BAC"/>
    <property type="match status" value="8"/>
</dbReference>
<dbReference type="SMART" id="SM00369">
    <property type="entry name" value="LRR_TYP"/>
    <property type="match status" value="11"/>
</dbReference>
<dbReference type="SMART" id="SM00220">
    <property type="entry name" value="S_TKc"/>
    <property type="match status" value="1"/>
</dbReference>
<dbReference type="SMART" id="SM00320">
    <property type="entry name" value="WD40"/>
    <property type="match status" value="4"/>
</dbReference>
<dbReference type="SUPFAM" id="SSF52799">
    <property type="entry name" value="(Phosphotyrosine protein) phosphatases II"/>
    <property type="match status" value="1"/>
</dbReference>
<dbReference type="SUPFAM" id="SSF52058">
    <property type="entry name" value="L domain-like"/>
    <property type="match status" value="1"/>
</dbReference>
<dbReference type="SUPFAM" id="SSF52540">
    <property type="entry name" value="P-loop containing nucleoside triphosphate hydrolases"/>
    <property type="match status" value="1"/>
</dbReference>
<dbReference type="SUPFAM" id="SSF56112">
    <property type="entry name" value="Protein kinase-like (PK-like)"/>
    <property type="match status" value="1"/>
</dbReference>
<dbReference type="SUPFAM" id="SSF50998">
    <property type="entry name" value="Quinoprotein alcohol dehydrogenase-like"/>
    <property type="match status" value="1"/>
</dbReference>
<dbReference type="PROSITE" id="PS51450">
    <property type="entry name" value="LRR"/>
    <property type="match status" value="12"/>
</dbReference>
<dbReference type="PROSITE" id="PS51339">
    <property type="entry name" value="PPASE_MYOTUBULARIN"/>
    <property type="match status" value="1"/>
</dbReference>
<dbReference type="PROSITE" id="PS50011">
    <property type="entry name" value="PROTEIN_KINASE_DOM"/>
    <property type="match status" value="1"/>
</dbReference>
<dbReference type="PROSITE" id="PS00108">
    <property type="entry name" value="PROTEIN_KINASE_ST"/>
    <property type="match status" value="1"/>
</dbReference>
<dbReference type="PROSITE" id="PS51424">
    <property type="entry name" value="ROC"/>
    <property type="match status" value="1"/>
</dbReference>
<dbReference type="PROSITE" id="PS50082">
    <property type="entry name" value="WD_REPEATS_2"/>
    <property type="match status" value="2"/>
</dbReference>
<dbReference type="PROSITE" id="PS50294">
    <property type="entry name" value="WD_REPEATS_REGION"/>
    <property type="match status" value="1"/>
</dbReference>
<protein>
    <recommendedName>
        <fullName>Probable serine/threonine-protein kinase pats1</fullName>
        <ecNumber>2.7.11.1</ecNumber>
    </recommendedName>
    <alternativeName>
        <fullName>Protein associated with the transduction of signal 1</fullName>
    </alternativeName>
</protein>
<evidence type="ECO:0000250" key="1"/>
<evidence type="ECO:0000255" key="2"/>
<evidence type="ECO:0000255" key="3">
    <source>
        <dbReference type="PROSITE-ProRule" id="PRU00159"/>
    </source>
</evidence>
<evidence type="ECO:0000255" key="4">
    <source>
        <dbReference type="PROSITE-ProRule" id="PRU00669"/>
    </source>
</evidence>
<evidence type="ECO:0000255" key="5">
    <source>
        <dbReference type="PROSITE-ProRule" id="PRU00758"/>
    </source>
</evidence>
<evidence type="ECO:0000255" key="6">
    <source>
        <dbReference type="PROSITE-ProRule" id="PRU10027"/>
    </source>
</evidence>
<evidence type="ECO:0000256" key="7">
    <source>
        <dbReference type="SAM" id="MobiDB-lite"/>
    </source>
</evidence>
<evidence type="ECO:0000269" key="8">
    <source>
    </source>
</evidence>
<evidence type="ECO:0000305" key="9"/>
<gene>
    <name type="primary">pats1</name>
    <name type="ORF">DDB_G0269250</name>
</gene>
<feature type="chain" id="PRO_0000358889" description="Probable serine/threonine-protein kinase pats1">
    <location>
        <begin position="1"/>
        <end position="3184"/>
    </location>
</feature>
<feature type="domain" description="Myotubularin phosphatase" evidence="4">
    <location>
        <begin position="842"/>
        <end position="1348"/>
    </location>
</feature>
<feature type="repeat" description="LRR 1">
    <location>
        <begin position="1391"/>
        <end position="1412"/>
    </location>
</feature>
<feature type="repeat" description="LRR 2">
    <location>
        <begin position="1416"/>
        <end position="1438"/>
    </location>
</feature>
<feature type="repeat" description="LRR 3">
    <location>
        <begin position="1439"/>
        <end position="1460"/>
    </location>
</feature>
<feature type="repeat" description="LRR 4">
    <location>
        <begin position="1467"/>
        <end position="1488"/>
    </location>
</feature>
<feature type="repeat" description="LRR 5">
    <location>
        <begin position="1491"/>
        <end position="1512"/>
    </location>
</feature>
<feature type="repeat" description="LRR 6">
    <location>
        <begin position="1514"/>
        <end position="1535"/>
    </location>
</feature>
<feature type="repeat" description="LRR 7">
    <location>
        <begin position="1541"/>
        <end position="1563"/>
    </location>
</feature>
<feature type="repeat" description="LRR 8">
    <location>
        <begin position="1564"/>
        <end position="1585"/>
    </location>
</feature>
<feature type="repeat" description="LRR 9">
    <location>
        <begin position="1587"/>
        <end position="1608"/>
    </location>
</feature>
<feature type="repeat" description="LRR 10">
    <location>
        <begin position="1610"/>
        <end position="1631"/>
    </location>
</feature>
<feature type="repeat" description="LRR 11">
    <location>
        <begin position="1633"/>
        <end position="1654"/>
    </location>
</feature>
<feature type="repeat" description="LRR 12">
    <location>
        <begin position="1656"/>
        <end position="1678"/>
    </location>
</feature>
<feature type="repeat" description="LRR 13">
    <location>
        <begin position="1680"/>
        <end position="1701"/>
    </location>
</feature>
<feature type="domain" description="Roc" evidence="5">
    <location>
        <begin position="1716"/>
        <end position="1910"/>
    </location>
</feature>
<feature type="domain" description="COR" evidence="2">
    <location>
        <begin position="1918"/>
        <end position="2127"/>
    </location>
</feature>
<feature type="domain" description="Protein kinase" evidence="3">
    <location>
        <begin position="2247"/>
        <end position="2519"/>
    </location>
</feature>
<feature type="repeat" description="WD 1">
    <location>
        <begin position="2745"/>
        <end position="2785"/>
    </location>
</feature>
<feature type="repeat" description="WD 2">
    <location>
        <begin position="2790"/>
        <end position="2829"/>
    </location>
</feature>
<feature type="repeat" description="WD 3">
    <location>
        <begin position="2909"/>
        <end position="2947"/>
    </location>
</feature>
<feature type="repeat" description="WD 4">
    <location>
        <begin position="2949"/>
        <end position="2986"/>
    </location>
</feature>
<feature type="repeat" description="WD 5">
    <location>
        <begin position="2990"/>
        <end position="3040"/>
    </location>
</feature>
<feature type="region of interest" description="Disordered" evidence="7">
    <location>
        <begin position="369"/>
        <end position="516"/>
    </location>
</feature>
<feature type="region of interest" description="Disordered" evidence="7">
    <location>
        <begin position="913"/>
        <end position="1013"/>
    </location>
</feature>
<feature type="region of interest" description="Small GTPase-like">
    <location>
        <begin position="1716"/>
        <end position="1910"/>
    </location>
</feature>
<feature type="region of interest" description="Disordered" evidence="7">
    <location>
        <begin position="2528"/>
        <end position="2609"/>
    </location>
</feature>
<feature type="region of interest" description="Disordered" evidence="7">
    <location>
        <begin position="2652"/>
        <end position="2671"/>
    </location>
</feature>
<feature type="region of interest" description="Disordered" evidence="7">
    <location>
        <begin position="3055"/>
        <end position="3164"/>
    </location>
</feature>
<feature type="compositionally biased region" description="Pro residues" evidence="7">
    <location>
        <begin position="369"/>
        <end position="378"/>
    </location>
</feature>
<feature type="compositionally biased region" description="Low complexity" evidence="7">
    <location>
        <begin position="379"/>
        <end position="415"/>
    </location>
</feature>
<feature type="compositionally biased region" description="Polar residues" evidence="7">
    <location>
        <begin position="421"/>
        <end position="450"/>
    </location>
</feature>
<feature type="compositionally biased region" description="Low complexity" evidence="7">
    <location>
        <begin position="451"/>
        <end position="512"/>
    </location>
</feature>
<feature type="compositionally biased region" description="Polar residues" evidence="7">
    <location>
        <begin position="913"/>
        <end position="934"/>
    </location>
</feature>
<feature type="compositionally biased region" description="Low complexity" evidence="7">
    <location>
        <begin position="935"/>
        <end position="993"/>
    </location>
</feature>
<feature type="compositionally biased region" description="Polar residues" evidence="7">
    <location>
        <begin position="1000"/>
        <end position="1013"/>
    </location>
</feature>
<feature type="compositionally biased region" description="Low complexity" evidence="7">
    <location>
        <begin position="2529"/>
        <end position="2555"/>
    </location>
</feature>
<feature type="compositionally biased region" description="Polar residues" evidence="7">
    <location>
        <begin position="2556"/>
        <end position="2576"/>
    </location>
</feature>
<feature type="compositionally biased region" description="Low complexity" evidence="7">
    <location>
        <begin position="3055"/>
        <end position="3126"/>
    </location>
</feature>
<feature type="compositionally biased region" description="Polar residues" evidence="7">
    <location>
        <begin position="3141"/>
        <end position="3157"/>
    </location>
</feature>
<feature type="active site" description="Proton acceptor" evidence="3 6">
    <location>
        <position position="2379"/>
    </location>
</feature>
<feature type="binding site" evidence="5">
    <location>
        <begin position="1729"/>
        <end position="1736"/>
    </location>
    <ligand>
        <name>GTP</name>
        <dbReference type="ChEBI" id="CHEBI:37565"/>
    </ligand>
</feature>
<feature type="binding site" evidence="5">
    <location>
        <begin position="1797"/>
        <end position="1801"/>
    </location>
    <ligand>
        <name>GTP</name>
        <dbReference type="ChEBI" id="CHEBI:37565"/>
    </ligand>
</feature>
<feature type="binding site" evidence="5">
    <location>
        <begin position="1854"/>
        <end position="1857"/>
    </location>
    <ligand>
        <name>GTP</name>
        <dbReference type="ChEBI" id="CHEBI:37565"/>
    </ligand>
</feature>
<feature type="binding site" evidence="3">
    <location>
        <begin position="2253"/>
        <end position="2261"/>
    </location>
    <ligand>
        <name>ATP</name>
        <dbReference type="ChEBI" id="CHEBI:30616"/>
    </ligand>
</feature>
<feature type="binding site" evidence="3">
    <location>
        <position position="2274"/>
    </location>
    <ligand>
        <name>ATP</name>
        <dbReference type="ChEBI" id="CHEBI:30616"/>
    </ligand>
</feature>
<feature type="sequence conflict" description="In Ref. 2; AAO12857." evidence="9" ref="2">
    <original>NK</original>
    <variation>II</variation>
    <location>
        <begin position="160"/>
        <end position="161"/>
    </location>
</feature>
<proteinExistence type="inferred from homology"/>
<accession>Q55E58</accession>
<accession>Q8I7W7</accession>
<reference key="1">
    <citation type="journal article" date="2005" name="Nature">
        <title>The genome of the social amoeba Dictyostelium discoideum.</title>
        <authorList>
            <person name="Eichinger L."/>
            <person name="Pachebat J.A."/>
            <person name="Gloeckner G."/>
            <person name="Rajandream M.A."/>
            <person name="Sucgang R."/>
            <person name="Berriman M."/>
            <person name="Song J."/>
            <person name="Olsen R."/>
            <person name="Szafranski K."/>
            <person name="Xu Q."/>
            <person name="Tunggal B."/>
            <person name="Kummerfeld S."/>
            <person name="Madera M."/>
            <person name="Konfortov B.A."/>
            <person name="Rivero F."/>
            <person name="Bankier A.T."/>
            <person name="Lehmann R."/>
            <person name="Hamlin N."/>
            <person name="Davies R."/>
            <person name="Gaudet P."/>
            <person name="Fey P."/>
            <person name="Pilcher K."/>
            <person name="Chen G."/>
            <person name="Saunders D."/>
            <person name="Sodergren E.J."/>
            <person name="Davis P."/>
            <person name="Kerhornou A."/>
            <person name="Nie X."/>
            <person name="Hall N."/>
            <person name="Anjard C."/>
            <person name="Hemphill L."/>
            <person name="Bason N."/>
            <person name="Farbrother P."/>
            <person name="Desany B."/>
            <person name="Just E."/>
            <person name="Morio T."/>
            <person name="Rost R."/>
            <person name="Churcher C.M."/>
            <person name="Cooper J."/>
            <person name="Haydock S."/>
            <person name="van Driessche N."/>
            <person name="Cronin A."/>
            <person name="Goodhead I."/>
            <person name="Muzny D.M."/>
            <person name="Mourier T."/>
            <person name="Pain A."/>
            <person name="Lu M."/>
            <person name="Harper D."/>
            <person name="Lindsay R."/>
            <person name="Hauser H."/>
            <person name="James K.D."/>
            <person name="Quiles M."/>
            <person name="Madan Babu M."/>
            <person name="Saito T."/>
            <person name="Buchrieser C."/>
            <person name="Wardroper A."/>
            <person name="Felder M."/>
            <person name="Thangavelu M."/>
            <person name="Johnson D."/>
            <person name="Knights A."/>
            <person name="Loulseged H."/>
            <person name="Mungall K.L."/>
            <person name="Oliver K."/>
            <person name="Price C."/>
            <person name="Quail M.A."/>
            <person name="Urushihara H."/>
            <person name="Hernandez J."/>
            <person name="Rabbinowitsch E."/>
            <person name="Steffen D."/>
            <person name="Sanders M."/>
            <person name="Ma J."/>
            <person name="Kohara Y."/>
            <person name="Sharp S."/>
            <person name="Simmonds M.N."/>
            <person name="Spiegler S."/>
            <person name="Tivey A."/>
            <person name="Sugano S."/>
            <person name="White B."/>
            <person name="Walker D."/>
            <person name="Woodward J.R."/>
            <person name="Winckler T."/>
            <person name="Tanaka Y."/>
            <person name="Shaulsky G."/>
            <person name="Schleicher M."/>
            <person name="Weinstock G.M."/>
            <person name="Rosenthal A."/>
            <person name="Cox E.C."/>
            <person name="Chisholm R.L."/>
            <person name="Gibbs R.A."/>
            <person name="Loomis W.F."/>
            <person name="Platzer M."/>
            <person name="Kay R.R."/>
            <person name="Williams J.G."/>
            <person name="Dear P.H."/>
            <person name="Noegel A.A."/>
            <person name="Barrell B.G."/>
            <person name="Kuspa A."/>
        </authorList>
    </citation>
    <scope>NUCLEOTIDE SEQUENCE [LARGE SCALE GENOMIC DNA]</scope>
    <source>
        <strain>AX4</strain>
    </source>
</reference>
<reference key="2">
    <citation type="journal article" date="2003" name="Mol. Biol. Cell">
        <title>The identification of pats1, a novel gene locus required for cytokinesis in Dictyostelium discoideum.</title>
        <authorList>
            <person name="Abysalh J.C."/>
            <person name="Kuchnicki L.L."/>
            <person name="Larochelle D.A."/>
        </authorList>
    </citation>
    <scope>NUCLEOTIDE SEQUENCE [GENOMIC DNA] OF 160-3123</scope>
    <scope>FUNCTION</scope>
</reference>
<reference key="3">
    <citation type="journal article" date="2008" name="FASEB J.">
        <title>The Roco protein family: a functional perspective.</title>
        <authorList>
            <person name="Marin I."/>
            <person name="van Egmond W.N."/>
            <person name="van Haastert P.J."/>
        </authorList>
    </citation>
    <scope>NOMENCLATURE</scope>
</reference>
<keyword id="KW-0067">ATP-binding</keyword>
<keyword id="KW-0342">GTP-binding</keyword>
<keyword id="KW-0418">Kinase</keyword>
<keyword id="KW-0433">Leucine-rich repeat</keyword>
<keyword id="KW-0547">Nucleotide-binding</keyword>
<keyword id="KW-1185">Reference proteome</keyword>
<keyword id="KW-0677">Repeat</keyword>
<keyword id="KW-0723">Serine/threonine-protein kinase</keyword>
<keyword id="KW-0808">Transferase</keyword>
<keyword id="KW-0853">WD repeat</keyword>
<organism>
    <name type="scientific">Dictyostelium discoideum</name>
    <name type="common">Social amoeba</name>
    <dbReference type="NCBI Taxonomy" id="44689"/>
    <lineage>
        <taxon>Eukaryota</taxon>
        <taxon>Amoebozoa</taxon>
        <taxon>Evosea</taxon>
        <taxon>Eumycetozoa</taxon>
        <taxon>Dictyostelia</taxon>
        <taxon>Dictyosteliales</taxon>
        <taxon>Dictyosteliaceae</taxon>
        <taxon>Dictyostelium</taxon>
    </lineage>
</organism>
<name>PATS1_DICDI</name>
<comment type="function">
    <text evidence="1 8">May act as a serine/threonine-protein kinase and guanine-nucleotide releasing factor (By similarity). Essential regulator of cytokinesis involved in the binding to actomyosin cytoskeleton.</text>
</comment>
<comment type="catalytic activity">
    <reaction>
        <text>L-seryl-[protein] + ATP = O-phospho-L-seryl-[protein] + ADP + H(+)</text>
        <dbReference type="Rhea" id="RHEA:17989"/>
        <dbReference type="Rhea" id="RHEA-COMP:9863"/>
        <dbReference type="Rhea" id="RHEA-COMP:11604"/>
        <dbReference type="ChEBI" id="CHEBI:15378"/>
        <dbReference type="ChEBI" id="CHEBI:29999"/>
        <dbReference type="ChEBI" id="CHEBI:30616"/>
        <dbReference type="ChEBI" id="CHEBI:83421"/>
        <dbReference type="ChEBI" id="CHEBI:456216"/>
        <dbReference type="EC" id="2.7.11.1"/>
    </reaction>
</comment>
<comment type="catalytic activity">
    <reaction>
        <text>L-threonyl-[protein] + ATP = O-phospho-L-threonyl-[protein] + ADP + H(+)</text>
        <dbReference type="Rhea" id="RHEA:46608"/>
        <dbReference type="Rhea" id="RHEA-COMP:11060"/>
        <dbReference type="Rhea" id="RHEA-COMP:11605"/>
        <dbReference type="ChEBI" id="CHEBI:15378"/>
        <dbReference type="ChEBI" id="CHEBI:30013"/>
        <dbReference type="ChEBI" id="CHEBI:30616"/>
        <dbReference type="ChEBI" id="CHEBI:61977"/>
        <dbReference type="ChEBI" id="CHEBI:456216"/>
        <dbReference type="EC" id="2.7.11.1"/>
    </reaction>
</comment>
<comment type="similarity">
    <text evidence="9">Belongs to the protein kinase superfamily. TKL Ser/Thr protein kinase family. ROCO subfamily.</text>
</comment>
<comment type="sequence caution" evidence="9">
    <conflict type="frameshift">
        <sequence resource="EMBL-CDS" id="AAO12857"/>
    </conflict>
</comment>